<reference key="1">
    <citation type="journal article" date="2009" name="BMC Genomics">
        <title>Evidence for niche adaptation in the genome of the bovine pathogen Streptococcus uberis.</title>
        <authorList>
            <person name="Ward P.N."/>
            <person name="Holden M.T.G."/>
            <person name="Leigh J.A."/>
            <person name="Lennard N."/>
            <person name="Bignell A."/>
            <person name="Barron A."/>
            <person name="Clark L."/>
            <person name="Quail M.A."/>
            <person name="Woodward J."/>
            <person name="Barrell B.G."/>
            <person name="Egan S.A."/>
            <person name="Field T.R."/>
            <person name="Maskell D."/>
            <person name="Kehoe M."/>
            <person name="Dowson C.G."/>
            <person name="Chanter N."/>
            <person name="Whatmore A.M."/>
            <person name="Bentley S.D."/>
            <person name="Parkhill J."/>
        </authorList>
    </citation>
    <scope>NUCLEOTIDE SEQUENCE [LARGE SCALE GENOMIC DNA]</scope>
    <source>
        <strain>ATCC BAA-854 / 0140J</strain>
    </source>
</reference>
<proteinExistence type="inferred from homology"/>
<sequence length="458" mass="49747">MTNYAIILAAGKGTRMKSDLPKVLHQVSGLTMLEHVFRSVAHITPQMNVTVIGHKAELVQEVLKEKSEFVLQTEQLGTGHAVMMAEEKLADLEGNTLVIAGDTPLITGESLKNLIDFHVNHKNVATILTAKAEDPFGYGRIIRNHDDEVVKIVEQKDANEYEQKVKEINTGTYVFDNKRLFEALKNINTNNAQGEYYLTDVISIFRENKEKVGAYVLRDFNESLGVNDRVALATAESVMRRRINKAHMINGVTFQNPDATYIEADVSIAADVMIEANVSLKGNSCIGAKSVLTNGTCIVDAQIGESVVITNSTIEESSIADGVTVGPYAHIRPGSQLDKNVHIGNFVEVKGSHIGENTKAGHLTYIGNAVVGSDVNFGAGTITVNYDGKNKYKTVIGNNVFVGSNSTLIAPLEIGDNALTAAGSTITKNVEPDSIAIGRSRQVIKEGYAKRLPHYPQK</sequence>
<accession>B9DRD5</accession>
<evidence type="ECO:0000255" key="1">
    <source>
        <dbReference type="HAMAP-Rule" id="MF_01631"/>
    </source>
</evidence>
<comment type="function">
    <text evidence="1">Catalyzes the last two sequential reactions in the de novo biosynthetic pathway for UDP-N-acetylglucosamine (UDP-GlcNAc). The C-terminal domain catalyzes the transfer of acetyl group from acetyl coenzyme A to glucosamine-1-phosphate (GlcN-1-P) to produce N-acetylglucosamine-1-phosphate (GlcNAc-1-P), which is converted into UDP-GlcNAc by the transfer of uridine 5-monophosphate (from uridine 5-triphosphate), a reaction catalyzed by the N-terminal domain.</text>
</comment>
<comment type="catalytic activity">
    <reaction evidence="1">
        <text>alpha-D-glucosamine 1-phosphate + acetyl-CoA = N-acetyl-alpha-D-glucosamine 1-phosphate + CoA + H(+)</text>
        <dbReference type="Rhea" id="RHEA:13725"/>
        <dbReference type="ChEBI" id="CHEBI:15378"/>
        <dbReference type="ChEBI" id="CHEBI:57287"/>
        <dbReference type="ChEBI" id="CHEBI:57288"/>
        <dbReference type="ChEBI" id="CHEBI:57776"/>
        <dbReference type="ChEBI" id="CHEBI:58516"/>
        <dbReference type="EC" id="2.3.1.157"/>
    </reaction>
</comment>
<comment type="catalytic activity">
    <reaction evidence="1">
        <text>N-acetyl-alpha-D-glucosamine 1-phosphate + UTP + H(+) = UDP-N-acetyl-alpha-D-glucosamine + diphosphate</text>
        <dbReference type="Rhea" id="RHEA:13509"/>
        <dbReference type="ChEBI" id="CHEBI:15378"/>
        <dbReference type="ChEBI" id="CHEBI:33019"/>
        <dbReference type="ChEBI" id="CHEBI:46398"/>
        <dbReference type="ChEBI" id="CHEBI:57705"/>
        <dbReference type="ChEBI" id="CHEBI:57776"/>
        <dbReference type="EC" id="2.7.7.23"/>
    </reaction>
</comment>
<comment type="cofactor">
    <cofactor evidence="1">
        <name>Mg(2+)</name>
        <dbReference type="ChEBI" id="CHEBI:18420"/>
    </cofactor>
    <text evidence="1">Binds 1 Mg(2+) ion per subunit.</text>
</comment>
<comment type="pathway">
    <text evidence="1">Nucleotide-sugar biosynthesis; UDP-N-acetyl-alpha-D-glucosamine biosynthesis; N-acetyl-alpha-D-glucosamine 1-phosphate from alpha-D-glucosamine 6-phosphate (route II): step 2/2.</text>
</comment>
<comment type="pathway">
    <text evidence="1">Nucleotide-sugar biosynthesis; UDP-N-acetyl-alpha-D-glucosamine biosynthesis; UDP-N-acetyl-alpha-D-glucosamine from N-acetyl-alpha-D-glucosamine 1-phosphate: step 1/1.</text>
</comment>
<comment type="pathway">
    <text evidence="1">Bacterial outer membrane biogenesis; LPS lipid A biosynthesis.</text>
</comment>
<comment type="subunit">
    <text evidence="1">Homotrimer.</text>
</comment>
<comment type="subcellular location">
    <subcellularLocation>
        <location evidence="1">Cytoplasm</location>
    </subcellularLocation>
</comment>
<comment type="similarity">
    <text evidence="1">In the N-terminal section; belongs to the N-acetylglucosamine-1-phosphate uridyltransferase family.</text>
</comment>
<comment type="similarity">
    <text evidence="1">In the C-terminal section; belongs to the transferase hexapeptide repeat family.</text>
</comment>
<feature type="chain" id="PRO_1000186500" description="Bifunctional protein GlmU">
    <location>
        <begin position="1"/>
        <end position="458"/>
    </location>
</feature>
<feature type="region of interest" description="Pyrophosphorylase" evidence="1">
    <location>
        <begin position="1"/>
        <end position="229"/>
    </location>
</feature>
<feature type="region of interest" description="Linker" evidence="1">
    <location>
        <begin position="230"/>
        <end position="250"/>
    </location>
</feature>
<feature type="region of interest" description="N-acetyltransferase" evidence="1">
    <location>
        <begin position="251"/>
        <end position="458"/>
    </location>
</feature>
<feature type="active site" description="Proton acceptor" evidence="1">
    <location>
        <position position="362"/>
    </location>
</feature>
<feature type="binding site" evidence="1">
    <location>
        <begin position="8"/>
        <end position="11"/>
    </location>
    <ligand>
        <name>UDP-N-acetyl-alpha-D-glucosamine</name>
        <dbReference type="ChEBI" id="CHEBI:57705"/>
    </ligand>
</feature>
<feature type="binding site" evidence="1">
    <location>
        <position position="22"/>
    </location>
    <ligand>
        <name>UDP-N-acetyl-alpha-D-glucosamine</name>
        <dbReference type="ChEBI" id="CHEBI:57705"/>
    </ligand>
</feature>
<feature type="binding site" evidence="1">
    <location>
        <position position="72"/>
    </location>
    <ligand>
        <name>UDP-N-acetyl-alpha-D-glucosamine</name>
        <dbReference type="ChEBI" id="CHEBI:57705"/>
    </ligand>
</feature>
<feature type="binding site" evidence="1">
    <location>
        <begin position="77"/>
        <end position="78"/>
    </location>
    <ligand>
        <name>UDP-N-acetyl-alpha-D-glucosamine</name>
        <dbReference type="ChEBI" id="CHEBI:57705"/>
    </ligand>
</feature>
<feature type="binding site" evidence="1">
    <location>
        <position position="102"/>
    </location>
    <ligand>
        <name>Mg(2+)</name>
        <dbReference type="ChEBI" id="CHEBI:18420"/>
    </ligand>
</feature>
<feature type="binding site" evidence="1">
    <location>
        <position position="139"/>
    </location>
    <ligand>
        <name>UDP-N-acetyl-alpha-D-glucosamine</name>
        <dbReference type="ChEBI" id="CHEBI:57705"/>
    </ligand>
</feature>
<feature type="binding site" evidence="1">
    <location>
        <position position="154"/>
    </location>
    <ligand>
        <name>UDP-N-acetyl-alpha-D-glucosamine</name>
        <dbReference type="ChEBI" id="CHEBI:57705"/>
    </ligand>
</feature>
<feature type="binding site" evidence="1">
    <location>
        <position position="169"/>
    </location>
    <ligand>
        <name>UDP-N-acetyl-alpha-D-glucosamine</name>
        <dbReference type="ChEBI" id="CHEBI:57705"/>
    </ligand>
</feature>
<feature type="binding site" evidence="1">
    <location>
        <position position="227"/>
    </location>
    <ligand>
        <name>Mg(2+)</name>
        <dbReference type="ChEBI" id="CHEBI:18420"/>
    </ligand>
</feature>
<feature type="binding site" evidence="1">
    <location>
        <position position="227"/>
    </location>
    <ligand>
        <name>UDP-N-acetyl-alpha-D-glucosamine</name>
        <dbReference type="ChEBI" id="CHEBI:57705"/>
    </ligand>
</feature>
<feature type="binding site" evidence="1">
    <location>
        <position position="332"/>
    </location>
    <ligand>
        <name>UDP-N-acetyl-alpha-D-glucosamine</name>
        <dbReference type="ChEBI" id="CHEBI:57705"/>
    </ligand>
</feature>
<feature type="binding site" evidence="1">
    <location>
        <position position="350"/>
    </location>
    <ligand>
        <name>UDP-N-acetyl-alpha-D-glucosamine</name>
        <dbReference type="ChEBI" id="CHEBI:57705"/>
    </ligand>
</feature>
<feature type="binding site" evidence="1">
    <location>
        <position position="365"/>
    </location>
    <ligand>
        <name>UDP-N-acetyl-alpha-D-glucosamine</name>
        <dbReference type="ChEBI" id="CHEBI:57705"/>
    </ligand>
</feature>
<feature type="binding site" evidence="1">
    <location>
        <position position="376"/>
    </location>
    <ligand>
        <name>UDP-N-acetyl-alpha-D-glucosamine</name>
        <dbReference type="ChEBI" id="CHEBI:57705"/>
    </ligand>
</feature>
<feature type="binding site" evidence="1">
    <location>
        <position position="379"/>
    </location>
    <ligand>
        <name>acetyl-CoA</name>
        <dbReference type="ChEBI" id="CHEBI:57288"/>
    </ligand>
</feature>
<feature type="binding site" evidence="1">
    <location>
        <begin position="385"/>
        <end position="386"/>
    </location>
    <ligand>
        <name>acetyl-CoA</name>
        <dbReference type="ChEBI" id="CHEBI:57288"/>
    </ligand>
</feature>
<feature type="binding site" evidence="1">
    <location>
        <position position="404"/>
    </location>
    <ligand>
        <name>acetyl-CoA</name>
        <dbReference type="ChEBI" id="CHEBI:57288"/>
    </ligand>
</feature>
<feature type="binding site" evidence="1">
    <location>
        <position position="422"/>
    </location>
    <ligand>
        <name>acetyl-CoA</name>
        <dbReference type="ChEBI" id="CHEBI:57288"/>
    </ligand>
</feature>
<feature type="binding site" evidence="1">
    <location>
        <position position="439"/>
    </location>
    <ligand>
        <name>acetyl-CoA</name>
        <dbReference type="ChEBI" id="CHEBI:57288"/>
    </ligand>
</feature>
<organism>
    <name type="scientific">Streptococcus uberis (strain ATCC BAA-854 / 0140J)</name>
    <dbReference type="NCBI Taxonomy" id="218495"/>
    <lineage>
        <taxon>Bacteria</taxon>
        <taxon>Bacillati</taxon>
        <taxon>Bacillota</taxon>
        <taxon>Bacilli</taxon>
        <taxon>Lactobacillales</taxon>
        <taxon>Streptococcaceae</taxon>
        <taxon>Streptococcus</taxon>
    </lineage>
</organism>
<name>GLMU_STRU0</name>
<dbReference type="EC" id="2.7.7.23" evidence="1"/>
<dbReference type="EC" id="2.3.1.157" evidence="1"/>
<dbReference type="EMBL" id="AM946015">
    <property type="protein sequence ID" value="CAR41160.1"/>
    <property type="molecule type" value="Genomic_DNA"/>
</dbReference>
<dbReference type="RefSeq" id="WP_012658001.1">
    <property type="nucleotide sequence ID" value="NC_012004.1"/>
</dbReference>
<dbReference type="SMR" id="B9DRD5"/>
<dbReference type="STRING" id="218495.SUB0468"/>
<dbReference type="KEGG" id="sub:SUB0468"/>
<dbReference type="eggNOG" id="COG1207">
    <property type="taxonomic scope" value="Bacteria"/>
</dbReference>
<dbReference type="HOGENOM" id="CLU_029499_15_2_9"/>
<dbReference type="OrthoDB" id="9775031at2"/>
<dbReference type="UniPathway" id="UPA00113">
    <property type="reaction ID" value="UER00532"/>
</dbReference>
<dbReference type="UniPathway" id="UPA00113">
    <property type="reaction ID" value="UER00533"/>
</dbReference>
<dbReference type="UniPathway" id="UPA00973"/>
<dbReference type="Proteomes" id="UP000000449">
    <property type="component" value="Chromosome"/>
</dbReference>
<dbReference type="GO" id="GO:0005737">
    <property type="term" value="C:cytoplasm"/>
    <property type="evidence" value="ECO:0007669"/>
    <property type="project" value="UniProtKB-SubCell"/>
</dbReference>
<dbReference type="GO" id="GO:0016020">
    <property type="term" value="C:membrane"/>
    <property type="evidence" value="ECO:0007669"/>
    <property type="project" value="GOC"/>
</dbReference>
<dbReference type="GO" id="GO:0019134">
    <property type="term" value="F:glucosamine-1-phosphate N-acetyltransferase activity"/>
    <property type="evidence" value="ECO:0007669"/>
    <property type="project" value="UniProtKB-UniRule"/>
</dbReference>
<dbReference type="GO" id="GO:0000287">
    <property type="term" value="F:magnesium ion binding"/>
    <property type="evidence" value="ECO:0007669"/>
    <property type="project" value="UniProtKB-UniRule"/>
</dbReference>
<dbReference type="GO" id="GO:0003977">
    <property type="term" value="F:UDP-N-acetylglucosamine diphosphorylase activity"/>
    <property type="evidence" value="ECO:0007669"/>
    <property type="project" value="UniProtKB-UniRule"/>
</dbReference>
<dbReference type="GO" id="GO:0000902">
    <property type="term" value="P:cell morphogenesis"/>
    <property type="evidence" value="ECO:0007669"/>
    <property type="project" value="UniProtKB-UniRule"/>
</dbReference>
<dbReference type="GO" id="GO:0071555">
    <property type="term" value="P:cell wall organization"/>
    <property type="evidence" value="ECO:0007669"/>
    <property type="project" value="UniProtKB-KW"/>
</dbReference>
<dbReference type="GO" id="GO:0009245">
    <property type="term" value="P:lipid A biosynthetic process"/>
    <property type="evidence" value="ECO:0007669"/>
    <property type="project" value="UniProtKB-UniRule"/>
</dbReference>
<dbReference type="GO" id="GO:0009252">
    <property type="term" value="P:peptidoglycan biosynthetic process"/>
    <property type="evidence" value="ECO:0007669"/>
    <property type="project" value="UniProtKB-UniRule"/>
</dbReference>
<dbReference type="GO" id="GO:0008360">
    <property type="term" value="P:regulation of cell shape"/>
    <property type="evidence" value="ECO:0007669"/>
    <property type="project" value="UniProtKB-KW"/>
</dbReference>
<dbReference type="GO" id="GO:0006048">
    <property type="term" value="P:UDP-N-acetylglucosamine biosynthetic process"/>
    <property type="evidence" value="ECO:0007669"/>
    <property type="project" value="UniProtKB-UniPathway"/>
</dbReference>
<dbReference type="CDD" id="cd02540">
    <property type="entry name" value="GT2_GlmU_N_bac"/>
    <property type="match status" value="1"/>
</dbReference>
<dbReference type="CDD" id="cd03353">
    <property type="entry name" value="LbH_GlmU_C"/>
    <property type="match status" value="1"/>
</dbReference>
<dbReference type="Gene3D" id="2.160.10.10">
    <property type="entry name" value="Hexapeptide repeat proteins"/>
    <property type="match status" value="1"/>
</dbReference>
<dbReference type="Gene3D" id="3.90.550.10">
    <property type="entry name" value="Spore Coat Polysaccharide Biosynthesis Protein SpsA, Chain A"/>
    <property type="match status" value="1"/>
</dbReference>
<dbReference type="HAMAP" id="MF_01631">
    <property type="entry name" value="GlmU"/>
    <property type="match status" value="1"/>
</dbReference>
<dbReference type="InterPro" id="IPR005882">
    <property type="entry name" value="Bifunctional_GlmU"/>
</dbReference>
<dbReference type="InterPro" id="IPR050065">
    <property type="entry name" value="GlmU-like"/>
</dbReference>
<dbReference type="InterPro" id="IPR038009">
    <property type="entry name" value="GlmU_C_LbH"/>
</dbReference>
<dbReference type="InterPro" id="IPR001451">
    <property type="entry name" value="Hexapep"/>
</dbReference>
<dbReference type="InterPro" id="IPR005835">
    <property type="entry name" value="NTP_transferase_dom"/>
</dbReference>
<dbReference type="InterPro" id="IPR029044">
    <property type="entry name" value="Nucleotide-diphossugar_trans"/>
</dbReference>
<dbReference type="InterPro" id="IPR011004">
    <property type="entry name" value="Trimer_LpxA-like_sf"/>
</dbReference>
<dbReference type="NCBIfam" id="TIGR01173">
    <property type="entry name" value="glmU"/>
    <property type="match status" value="1"/>
</dbReference>
<dbReference type="NCBIfam" id="NF010934">
    <property type="entry name" value="PRK14354.1"/>
    <property type="match status" value="1"/>
</dbReference>
<dbReference type="PANTHER" id="PTHR43584:SF3">
    <property type="entry name" value="BIFUNCTIONAL PROTEIN GLMU"/>
    <property type="match status" value="1"/>
</dbReference>
<dbReference type="PANTHER" id="PTHR43584">
    <property type="entry name" value="NUCLEOTIDYL TRANSFERASE"/>
    <property type="match status" value="1"/>
</dbReference>
<dbReference type="Pfam" id="PF00132">
    <property type="entry name" value="Hexapep"/>
    <property type="match status" value="2"/>
</dbReference>
<dbReference type="Pfam" id="PF00483">
    <property type="entry name" value="NTP_transferase"/>
    <property type="match status" value="1"/>
</dbReference>
<dbReference type="SUPFAM" id="SSF53448">
    <property type="entry name" value="Nucleotide-diphospho-sugar transferases"/>
    <property type="match status" value="1"/>
</dbReference>
<dbReference type="SUPFAM" id="SSF51161">
    <property type="entry name" value="Trimeric LpxA-like enzymes"/>
    <property type="match status" value="1"/>
</dbReference>
<keyword id="KW-0012">Acyltransferase</keyword>
<keyword id="KW-0133">Cell shape</keyword>
<keyword id="KW-0961">Cell wall biogenesis/degradation</keyword>
<keyword id="KW-0963">Cytoplasm</keyword>
<keyword id="KW-0460">Magnesium</keyword>
<keyword id="KW-0479">Metal-binding</keyword>
<keyword id="KW-0511">Multifunctional enzyme</keyword>
<keyword id="KW-0548">Nucleotidyltransferase</keyword>
<keyword id="KW-0573">Peptidoglycan synthesis</keyword>
<keyword id="KW-1185">Reference proteome</keyword>
<keyword id="KW-0677">Repeat</keyword>
<keyword id="KW-0808">Transferase</keyword>
<gene>
    <name evidence="1" type="primary">glmU</name>
    <name type="ordered locus">SUB0468</name>
</gene>
<protein>
    <recommendedName>
        <fullName evidence="1">Bifunctional protein GlmU</fullName>
    </recommendedName>
    <domain>
        <recommendedName>
            <fullName evidence="1">UDP-N-acetylglucosamine pyrophosphorylase</fullName>
            <ecNumber evidence="1">2.7.7.23</ecNumber>
        </recommendedName>
        <alternativeName>
            <fullName evidence="1">N-acetylglucosamine-1-phosphate uridyltransferase</fullName>
        </alternativeName>
    </domain>
    <domain>
        <recommendedName>
            <fullName evidence="1">Glucosamine-1-phosphate N-acetyltransferase</fullName>
            <ecNumber evidence="1">2.3.1.157</ecNumber>
        </recommendedName>
    </domain>
</protein>